<organism>
    <name type="scientific">Neosartorya fischeri (strain ATCC 1020 / DSM 3700 / CBS 544.65 / FGSC A1164 / JCM 1740 / NRRL 181 / WB 181)</name>
    <name type="common">Aspergillus fischerianus</name>
    <dbReference type="NCBI Taxonomy" id="331117"/>
    <lineage>
        <taxon>Eukaryota</taxon>
        <taxon>Fungi</taxon>
        <taxon>Dikarya</taxon>
        <taxon>Ascomycota</taxon>
        <taxon>Pezizomycotina</taxon>
        <taxon>Eurotiomycetes</taxon>
        <taxon>Eurotiomycetidae</taxon>
        <taxon>Eurotiales</taxon>
        <taxon>Aspergillaceae</taxon>
        <taxon>Aspergillus</taxon>
        <taxon>Aspergillus subgen. Fumigati</taxon>
    </lineage>
</organism>
<reference key="1">
    <citation type="journal article" date="2008" name="PLoS Genet.">
        <title>Genomic islands in the pathogenic filamentous fungus Aspergillus fumigatus.</title>
        <authorList>
            <person name="Fedorova N.D."/>
            <person name="Khaldi N."/>
            <person name="Joardar V.S."/>
            <person name="Maiti R."/>
            <person name="Amedeo P."/>
            <person name="Anderson M.J."/>
            <person name="Crabtree J."/>
            <person name="Silva J.C."/>
            <person name="Badger J.H."/>
            <person name="Albarraq A."/>
            <person name="Angiuoli S."/>
            <person name="Bussey H."/>
            <person name="Bowyer P."/>
            <person name="Cotty P.J."/>
            <person name="Dyer P.S."/>
            <person name="Egan A."/>
            <person name="Galens K."/>
            <person name="Fraser-Liggett C.M."/>
            <person name="Haas B.J."/>
            <person name="Inman J.M."/>
            <person name="Kent R."/>
            <person name="Lemieux S."/>
            <person name="Malavazi I."/>
            <person name="Orvis J."/>
            <person name="Roemer T."/>
            <person name="Ronning C.M."/>
            <person name="Sundaram J.P."/>
            <person name="Sutton G."/>
            <person name="Turner G."/>
            <person name="Venter J.C."/>
            <person name="White O.R."/>
            <person name="Whitty B.R."/>
            <person name="Youngman P."/>
            <person name="Wolfe K.H."/>
            <person name="Goldman G.H."/>
            <person name="Wortman J.R."/>
            <person name="Jiang B."/>
            <person name="Denning D.W."/>
            <person name="Nierman W.C."/>
        </authorList>
    </citation>
    <scope>NUCLEOTIDE SEQUENCE [LARGE SCALE GENOMIC DNA]</scope>
    <source>
        <strain>ATCC 1020 / DSM 3700 / CBS 544.65 / FGSC A1164 / JCM 1740 / NRRL 181 / WB 181</strain>
    </source>
</reference>
<feature type="signal peptide" evidence="2">
    <location>
        <begin position="1"/>
        <end position="17"/>
    </location>
</feature>
<feature type="chain" id="PRO_0000395076" description="Probable alpha-galactosidase D">
    <location>
        <begin position="18"/>
        <end position="648"/>
    </location>
</feature>
<feature type="active site" description="Nucleophile" evidence="1">
    <location>
        <position position="154"/>
    </location>
</feature>
<feature type="active site" description="Proton donor" evidence="1">
    <location>
        <position position="221"/>
    </location>
</feature>
<feature type="binding site" evidence="1">
    <location>
        <begin position="199"/>
        <end position="203"/>
    </location>
    <ligand>
        <name>substrate</name>
    </ligand>
</feature>
<feature type="glycosylation site" description="N-linked (GlcNAc...) asparagine" evidence="2">
    <location>
        <position position="84"/>
    </location>
</feature>
<feature type="glycosylation site" description="N-linked (GlcNAc...) asparagine" evidence="2">
    <location>
        <position position="90"/>
    </location>
</feature>
<feature type="glycosylation site" description="N-linked (GlcNAc...) asparagine" evidence="2">
    <location>
        <position position="339"/>
    </location>
</feature>
<feature type="glycosylation site" description="N-linked (GlcNAc...) asparagine" evidence="2">
    <location>
        <position position="505"/>
    </location>
</feature>
<feature type="glycosylation site" description="N-linked (GlcNAc...) asparagine" evidence="2">
    <location>
        <position position="572"/>
    </location>
</feature>
<feature type="disulfide bond" evidence="1">
    <location>
        <begin position="123"/>
        <end position="156"/>
    </location>
</feature>
<comment type="function">
    <text evidence="1">Hydrolyzes a variety of simple alpha-D-galactoside as well as more complex molecules such as oligosaccharides and polysaccharides.</text>
</comment>
<comment type="catalytic activity">
    <reaction>
        <text>Hydrolysis of terminal, non-reducing alpha-D-galactose residues in alpha-D-galactosides, including galactose oligosaccharides, galactomannans and galactolipids.</text>
        <dbReference type="EC" id="3.2.1.22"/>
    </reaction>
</comment>
<comment type="subcellular location">
    <subcellularLocation>
        <location evidence="1">Secreted</location>
    </subcellularLocation>
</comment>
<comment type="similarity">
    <text evidence="3">Belongs to the glycosyl hydrolase 27 family.</text>
</comment>
<proteinExistence type="inferred from homology"/>
<keyword id="KW-0119">Carbohydrate metabolism</keyword>
<keyword id="KW-1015">Disulfide bond</keyword>
<keyword id="KW-0325">Glycoprotein</keyword>
<keyword id="KW-0326">Glycosidase</keyword>
<keyword id="KW-0378">Hydrolase</keyword>
<keyword id="KW-0624">Polysaccharide degradation</keyword>
<keyword id="KW-1185">Reference proteome</keyword>
<keyword id="KW-0964">Secreted</keyword>
<keyword id="KW-0732">Signal</keyword>
<name>AGALD_NEOFI</name>
<accession>A1D9S3</accession>
<protein>
    <recommendedName>
        <fullName>Probable alpha-galactosidase D</fullName>
        <ecNumber>3.2.1.22</ecNumber>
    </recommendedName>
    <alternativeName>
        <fullName>Melibiase D</fullName>
    </alternativeName>
</protein>
<sequence length="648" mass="70198">MESIVWLLLLSPALVAGSLHPRIDNGLAKTPQMGWNSYNYYSCSPNEAIVRSNAKALVDLGLADLGYRYVTTDCGWSVADRLPNGTLTWNETLFPSGFPAMGKYLHELGLLFGVYGDSGTKLCGSPPDQVGSLYHEEQDAKTFAEWGADSLKYDNCYSDAATNYPNVNYEPSTSPRPRYEIMSSALARVGRPILFQICEWGIDFPALWAPALGSSWRIGNDIIPEWRSIFRTLNQAVPNTDFAGPGQWADLDMLYVGNGVFSLPEEQTHFSLWAILKSPLTIGAALKDDDTSINQASLEVLKQKDVIGFNQDALGVSASLKRRWSDEGYEVWSGPLSGNRTVVAVINWRDESRDLTLDLPDVGLQYAQVARNIWGKTVVRDVRTSYTAGVAGHGTMLLELQGTIPSGLYPAKIFAKSTDQKTTFESIYAATTSANYELAITFSRPSTETVTITTSSGQTISISGKSGRIALTAGSNTITIQHKTPIESIQITPPTGTYYANTVFNVTGSAKHTTCGSGCSPVGSKIGDLSPNSNAYTSIPATTVGSKYLAIDYINNEVAFSSSWGWGSNSRNLTVSVNDGAPVRLEVPLSGRHSELFSPGKGWWDTATLGVLTSGWKKGENKVVFGNQGGEDGFQTYAADFVGVRILD</sequence>
<gene>
    <name type="primary">aglD</name>
    <name type="ORF">NFIA_029860</name>
</gene>
<dbReference type="EC" id="3.2.1.22"/>
<dbReference type="EMBL" id="DS027693">
    <property type="protein sequence ID" value="EAW20554.1"/>
    <property type="molecule type" value="Genomic_DNA"/>
</dbReference>
<dbReference type="RefSeq" id="XP_001262451.1">
    <property type="nucleotide sequence ID" value="XM_001262450.1"/>
</dbReference>
<dbReference type="SMR" id="A1D9S3"/>
<dbReference type="STRING" id="331117.A1D9S3"/>
<dbReference type="GlyCosmos" id="A1D9S3">
    <property type="glycosylation" value="5 sites, No reported glycans"/>
</dbReference>
<dbReference type="EnsemblFungi" id="EAW20554">
    <property type="protein sequence ID" value="EAW20554"/>
    <property type="gene ID" value="NFIA_029860"/>
</dbReference>
<dbReference type="GeneID" id="4589010"/>
<dbReference type="KEGG" id="nfi:NFIA_029860"/>
<dbReference type="VEuPathDB" id="FungiDB:NFIA_029860"/>
<dbReference type="eggNOG" id="KOG2366">
    <property type="taxonomic scope" value="Eukaryota"/>
</dbReference>
<dbReference type="HOGENOM" id="CLU_013093_3_0_1"/>
<dbReference type="OMA" id="SYNHYSC"/>
<dbReference type="OrthoDB" id="5795902at2759"/>
<dbReference type="Proteomes" id="UP000006702">
    <property type="component" value="Unassembled WGS sequence"/>
</dbReference>
<dbReference type="GO" id="GO:0005576">
    <property type="term" value="C:extracellular region"/>
    <property type="evidence" value="ECO:0007669"/>
    <property type="project" value="UniProtKB-SubCell"/>
</dbReference>
<dbReference type="GO" id="GO:0004557">
    <property type="term" value="F:alpha-galactosidase activity"/>
    <property type="evidence" value="ECO:0007669"/>
    <property type="project" value="UniProtKB-EC"/>
</dbReference>
<dbReference type="GO" id="GO:0000272">
    <property type="term" value="P:polysaccharide catabolic process"/>
    <property type="evidence" value="ECO:0007669"/>
    <property type="project" value="UniProtKB-KW"/>
</dbReference>
<dbReference type="CDD" id="cd04081">
    <property type="entry name" value="CBM35_galactosidase-like"/>
    <property type="match status" value="1"/>
</dbReference>
<dbReference type="CDD" id="cd14792">
    <property type="entry name" value="GH27"/>
    <property type="match status" value="1"/>
</dbReference>
<dbReference type="FunFam" id="2.60.40.1180:FF:000008">
    <property type="entry name" value="Alpha-galactosidase"/>
    <property type="match status" value="1"/>
</dbReference>
<dbReference type="FunFam" id="3.20.20.70:FF:000197">
    <property type="entry name" value="Alpha-galactosidase"/>
    <property type="match status" value="1"/>
</dbReference>
<dbReference type="FunFam" id="2.60.120.260:FF:000162">
    <property type="entry name" value="Probable alpha-galactosidase D"/>
    <property type="match status" value="1"/>
</dbReference>
<dbReference type="Gene3D" id="3.20.20.70">
    <property type="entry name" value="Aldolase class I"/>
    <property type="match status" value="1"/>
</dbReference>
<dbReference type="Gene3D" id="2.60.120.260">
    <property type="entry name" value="Galactose-binding domain-like"/>
    <property type="match status" value="1"/>
</dbReference>
<dbReference type="Gene3D" id="2.60.40.1180">
    <property type="entry name" value="Golgi alpha-mannosidase II"/>
    <property type="match status" value="1"/>
</dbReference>
<dbReference type="InterPro" id="IPR013785">
    <property type="entry name" value="Aldolase_TIM"/>
</dbReference>
<dbReference type="InterPro" id="IPR002241">
    <property type="entry name" value="Glyco_hydro_27"/>
</dbReference>
<dbReference type="InterPro" id="IPR013780">
    <property type="entry name" value="Glyco_hydro_b"/>
</dbReference>
<dbReference type="InterPro" id="IPR017853">
    <property type="entry name" value="Glycoside_hydrolase_SF"/>
</dbReference>
<dbReference type="InterPro" id="IPR041233">
    <property type="entry name" value="Melibiase_C"/>
</dbReference>
<dbReference type="PANTHER" id="PTHR11452:SF75">
    <property type="entry name" value="ALPHA-GALACTOSIDASE MEL1"/>
    <property type="match status" value="1"/>
</dbReference>
<dbReference type="PANTHER" id="PTHR11452">
    <property type="entry name" value="ALPHA-GALACTOSIDASE/ALPHA-N-ACETYLGALACTOSAMINIDASE"/>
    <property type="match status" value="1"/>
</dbReference>
<dbReference type="Pfam" id="PF16499">
    <property type="entry name" value="Melibiase_2"/>
    <property type="match status" value="1"/>
</dbReference>
<dbReference type="Pfam" id="PF17801">
    <property type="entry name" value="Melibiase_C"/>
    <property type="match status" value="1"/>
</dbReference>
<dbReference type="PRINTS" id="PR00740">
    <property type="entry name" value="GLHYDRLASE27"/>
</dbReference>
<dbReference type="SUPFAM" id="SSF51445">
    <property type="entry name" value="(Trans)glycosidases"/>
    <property type="match status" value="1"/>
</dbReference>
<dbReference type="SUPFAM" id="SSF51011">
    <property type="entry name" value="Glycosyl hydrolase domain"/>
    <property type="match status" value="1"/>
</dbReference>
<evidence type="ECO:0000250" key="1"/>
<evidence type="ECO:0000255" key="2"/>
<evidence type="ECO:0000305" key="3"/>